<keyword id="KW-0032">Aminotransferase</keyword>
<keyword id="KW-0808">Transferase</keyword>
<dbReference type="EC" id="2.1.2.10" evidence="1"/>
<dbReference type="EMBL" id="CP001252">
    <property type="protein sequence ID" value="ACK48098.1"/>
    <property type="molecule type" value="Genomic_DNA"/>
</dbReference>
<dbReference type="RefSeq" id="WP_012588562.1">
    <property type="nucleotide sequence ID" value="NC_011663.1"/>
</dbReference>
<dbReference type="SMR" id="B8EB47"/>
<dbReference type="KEGG" id="sbp:Sbal223_3619"/>
<dbReference type="HOGENOM" id="CLU_007884_10_2_6"/>
<dbReference type="Proteomes" id="UP000002507">
    <property type="component" value="Chromosome"/>
</dbReference>
<dbReference type="GO" id="GO:0005829">
    <property type="term" value="C:cytosol"/>
    <property type="evidence" value="ECO:0007669"/>
    <property type="project" value="TreeGrafter"/>
</dbReference>
<dbReference type="GO" id="GO:0005960">
    <property type="term" value="C:glycine cleavage complex"/>
    <property type="evidence" value="ECO:0007669"/>
    <property type="project" value="InterPro"/>
</dbReference>
<dbReference type="GO" id="GO:0004047">
    <property type="term" value="F:aminomethyltransferase activity"/>
    <property type="evidence" value="ECO:0007669"/>
    <property type="project" value="UniProtKB-UniRule"/>
</dbReference>
<dbReference type="GO" id="GO:0008483">
    <property type="term" value="F:transaminase activity"/>
    <property type="evidence" value="ECO:0007669"/>
    <property type="project" value="UniProtKB-KW"/>
</dbReference>
<dbReference type="GO" id="GO:0019464">
    <property type="term" value="P:glycine decarboxylation via glycine cleavage system"/>
    <property type="evidence" value="ECO:0007669"/>
    <property type="project" value="UniProtKB-UniRule"/>
</dbReference>
<dbReference type="FunFam" id="2.40.30.110:FF:000001">
    <property type="entry name" value="Aminomethyltransferase"/>
    <property type="match status" value="1"/>
</dbReference>
<dbReference type="FunFam" id="3.30.70.1400:FF:000001">
    <property type="entry name" value="Aminomethyltransferase"/>
    <property type="match status" value="1"/>
</dbReference>
<dbReference type="FunFam" id="4.10.1250.10:FF:000001">
    <property type="entry name" value="Aminomethyltransferase"/>
    <property type="match status" value="1"/>
</dbReference>
<dbReference type="Gene3D" id="2.40.30.110">
    <property type="entry name" value="Aminomethyltransferase beta-barrel domains"/>
    <property type="match status" value="1"/>
</dbReference>
<dbReference type="Gene3D" id="3.30.70.1400">
    <property type="entry name" value="Aminomethyltransferase beta-barrel domains"/>
    <property type="match status" value="1"/>
</dbReference>
<dbReference type="Gene3D" id="4.10.1250.10">
    <property type="entry name" value="Aminomethyltransferase fragment"/>
    <property type="match status" value="1"/>
</dbReference>
<dbReference type="Gene3D" id="3.30.1360.120">
    <property type="entry name" value="Probable tRNA modification gtpase trme, domain 1"/>
    <property type="match status" value="1"/>
</dbReference>
<dbReference type="HAMAP" id="MF_00259">
    <property type="entry name" value="GcvT"/>
    <property type="match status" value="1"/>
</dbReference>
<dbReference type="InterPro" id="IPR006223">
    <property type="entry name" value="GCS_T"/>
</dbReference>
<dbReference type="InterPro" id="IPR022903">
    <property type="entry name" value="GCS_T_bac"/>
</dbReference>
<dbReference type="InterPro" id="IPR013977">
    <property type="entry name" value="GCST_C"/>
</dbReference>
<dbReference type="InterPro" id="IPR006222">
    <property type="entry name" value="GCV_T_N"/>
</dbReference>
<dbReference type="InterPro" id="IPR028896">
    <property type="entry name" value="GcvT/YgfZ/DmdA"/>
</dbReference>
<dbReference type="InterPro" id="IPR029043">
    <property type="entry name" value="GcvT/YgfZ_C"/>
</dbReference>
<dbReference type="InterPro" id="IPR027266">
    <property type="entry name" value="TrmE/GcvT_dom1"/>
</dbReference>
<dbReference type="NCBIfam" id="TIGR00528">
    <property type="entry name" value="gcvT"/>
    <property type="match status" value="1"/>
</dbReference>
<dbReference type="NCBIfam" id="NF001567">
    <property type="entry name" value="PRK00389.1"/>
    <property type="match status" value="1"/>
</dbReference>
<dbReference type="PANTHER" id="PTHR43757">
    <property type="entry name" value="AMINOMETHYLTRANSFERASE"/>
    <property type="match status" value="1"/>
</dbReference>
<dbReference type="PANTHER" id="PTHR43757:SF2">
    <property type="entry name" value="AMINOMETHYLTRANSFERASE, MITOCHONDRIAL"/>
    <property type="match status" value="1"/>
</dbReference>
<dbReference type="Pfam" id="PF01571">
    <property type="entry name" value="GCV_T"/>
    <property type="match status" value="1"/>
</dbReference>
<dbReference type="Pfam" id="PF08669">
    <property type="entry name" value="GCV_T_C"/>
    <property type="match status" value="1"/>
</dbReference>
<dbReference type="PIRSF" id="PIRSF006487">
    <property type="entry name" value="GcvT"/>
    <property type="match status" value="1"/>
</dbReference>
<dbReference type="SUPFAM" id="SSF101790">
    <property type="entry name" value="Aminomethyltransferase beta-barrel domain"/>
    <property type="match status" value="1"/>
</dbReference>
<dbReference type="SUPFAM" id="SSF103025">
    <property type="entry name" value="Folate-binding domain"/>
    <property type="match status" value="1"/>
</dbReference>
<reference key="1">
    <citation type="submission" date="2008-12" db="EMBL/GenBank/DDBJ databases">
        <title>Complete sequence of chromosome of Shewanella baltica OS223.</title>
        <authorList>
            <consortium name="US DOE Joint Genome Institute"/>
            <person name="Lucas S."/>
            <person name="Copeland A."/>
            <person name="Lapidus A."/>
            <person name="Glavina del Rio T."/>
            <person name="Dalin E."/>
            <person name="Tice H."/>
            <person name="Bruce D."/>
            <person name="Goodwin L."/>
            <person name="Pitluck S."/>
            <person name="Chertkov O."/>
            <person name="Meincke L."/>
            <person name="Brettin T."/>
            <person name="Detter J.C."/>
            <person name="Han C."/>
            <person name="Kuske C.R."/>
            <person name="Larimer F."/>
            <person name="Land M."/>
            <person name="Hauser L."/>
            <person name="Kyrpides N."/>
            <person name="Ovchinnikova G."/>
            <person name="Brettar I."/>
            <person name="Rodrigues J."/>
            <person name="Konstantinidis K."/>
            <person name="Tiedje J."/>
        </authorList>
    </citation>
    <scope>NUCLEOTIDE SEQUENCE [LARGE SCALE GENOMIC DNA]</scope>
    <source>
        <strain>OS223</strain>
    </source>
</reference>
<proteinExistence type="inferred from homology"/>
<feature type="chain" id="PRO_1000125645" description="Aminomethyltransferase">
    <location>
        <begin position="1"/>
        <end position="364"/>
    </location>
</feature>
<sequence>MANKTILFNKHLESNAKMVDFHGWDMPLNYGSQIEEHNAVRQDAGMFDVSHMTVVDVIGNDACAFLRKLLANDVAKLKVPGKALYGGMLDENAGVIDDLITYYLTDTNYRVVVNSATREKDLAWIAKQSQGFDVTVTERPELAMIAVQGPNAKAKAAAVLSAEQNTAIEGMKPFFGKQAGSLFIATTGYTGEAGYEIIVPEDEAQAMWQALLDQGVKPCGLGARDTLRLEAGMNLYGLDMDETINPLAANMGWTIAWEPSDRDFIGRKALETLRDAGTDKLVGLVMEEKGVLRHDMPVFFTDSAGVEHQGVITSGTFSPTLGYSIAMARVPNSIGDTAEVEMRKKRVAVRVVAPNFVRNGKQAF</sequence>
<accession>B8EB47</accession>
<protein>
    <recommendedName>
        <fullName evidence="1">Aminomethyltransferase</fullName>
        <ecNumber evidence="1">2.1.2.10</ecNumber>
    </recommendedName>
    <alternativeName>
        <fullName evidence="1">Glycine cleavage system T protein</fullName>
    </alternativeName>
</protein>
<gene>
    <name evidence="1" type="primary">gcvT</name>
    <name type="ordered locus">Sbal223_3619</name>
</gene>
<evidence type="ECO:0000255" key="1">
    <source>
        <dbReference type="HAMAP-Rule" id="MF_00259"/>
    </source>
</evidence>
<name>GCST_SHEB2</name>
<organism>
    <name type="scientific">Shewanella baltica (strain OS223)</name>
    <dbReference type="NCBI Taxonomy" id="407976"/>
    <lineage>
        <taxon>Bacteria</taxon>
        <taxon>Pseudomonadati</taxon>
        <taxon>Pseudomonadota</taxon>
        <taxon>Gammaproteobacteria</taxon>
        <taxon>Alteromonadales</taxon>
        <taxon>Shewanellaceae</taxon>
        <taxon>Shewanella</taxon>
    </lineage>
</organism>
<comment type="function">
    <text evidence="1">The glycine cleavage system catalyzes the degradation of glycine.</text>
</comment>
<comment type="catalytic activity">
    <reaction evidence="1">
        <text>N(6)-[(R)-S(8)-aminomethyldihydrolipoyl]-L-lysyl-[protein] + (6S)-5,6,7,8-tetrahydrofolate = N(6)-[(R)-dihydrolipoyl]-L-lysyl-[protein] + (6R)-5,10-methylene-5,6,7,8-tetrahydrofolate + NH4(+)</text>
        <dbReference type="Rhea" id="RHEA:16945"/>
        <dbReference type="Rhea" id="RHEA-COMP:10475"/>
        <dbReference type="Rhea" id="RHEA-COMP:10492"/>
        <dbReference type="ChEBI" id="CHEBI:15636"/>
        <dbReference type="ChEBI" id="CHEBI:28938"/>
        <dbReference type="ChEBI" id="CHEBI:57453"/>
        <dbReference type="ChEBI" id="CHEBI:83100"/>
        <dbReference type="ChEBI" id="CHEBI:83143"/>
        <dbReference type="EC" id="2.1.2.10"/>
    </reaction>
</comment>
<comment type="subunit">
    <text evidence="1">The glycine cleavage system is composed of four proteins: P, T, L and H.</text>
</comment>
<comment type="similarity">
    <text evidence="1">Belongs to the GcvT family.</text>
</comment>